<proteinExistence type="inferred from homology"/>
<feature type="chain" id="PRO_1000092276" description="Phosphoheptose isomerase">
    <location>
        <begin position="1"/>
        <end position="192"/>
    </location>
</feature>
<feature type="domain" description="SIS" evidence="1">
    <location>
        <begin position="35"/>
        <end position="192"/>
    </location>
</feature>
<feature type="binding site" evidence="1">
    <location>
        <begin position="50"/>
        <end position="52"/>
    </location>
    <ligand>
        <name>substrate</name>
    </ligand>
</feature>
<feature type="binding site" evidence="1">
    <location>
        <position position="59"/>
    </location>
    <ligand>
        <name>Zn(2+)</name>
        <dbReference type="ChEBI" id="CHEBI:29105"/>
    </ligand>
</feature>
<feature type="binding site" evidence="1">
    <location>
        <position position="63"/>
    </location>
    <ligand>
        <name>substrate</name>
    </ligand>
</feature>
<feature type="binding site" evidence="1">
    <location>
        <position position="63"/>
    </location>
    <ligand>
        <name>Zn(2+)</name>
        <dbReference type="ChEBI" id="CHEBI:29105"/>
    </ligand>
</feature>
<feature type="binding site" evidence="1">
    <location>
        <begin position="92"/>
        <end position="93"/>
    </location>
    <ligand>
        <name>substrate</name>
    </ligand>
</feature>
<feature type="binding site" evidence="1">
    <location>
        <begin position="118"/>
        <end position="120"/>
    </location>
    <ligand>
        <name>substrate</name>
    </ligand>
</feature>
<feature type="binding site" evidence="1">
    <location>
        <position position="123"/>
    </location>
    <ligand>
        <name>substrate</name>
    </ligand>
</feature>
<feature type="binding site" evidence="1">
    <location>
        <position position="170"/>
    </location>
    <ligand>
        <name>substrate</name>
    </ligand>
</feature>
<feature type="binding site" evidence="1">
    <location>
        <position position="170"/>
    </location>
    <ligand>
        <name>Zn(2+)</name>
        <dbReference type="ChEBI" id="CHEBI:29105"/>
    </ligand>
</feature>
<feature type="binding site" evidence="1">
    <location>
        <position position="178"/>
    </location>
    <ligand>
        <name>Zn(2+)</name>
        <dbReference type="ChEBI" id="CHEBI:29105"/>
    </ligand>
</feature>
<sequence length="192" mass="21111">MIDDLIQKEFLAHKEALKKSLESLQEMLKQSVHLLIETLENQGKILICGNGGSASDAQHFAAELTGRYKLERKGLSAISLSTDTSALTAIANDYGYEEVFARQVEALGNKEDVLIGISTSGNSKNVLKAYEKAKDLGMKTLSLAGRDGGKMKPLSDMALIVPSDDTPRIQEMHILMIHILCDCIERHFAHKN</sequence>
<reference key="1">
    <citation type="submission" date="2008-10" db="EMBL/GenBank/DDBJ databases">
        <title>The complete genome sequence of Helicobacter pylori strain P12.</title>
        <authorList>
            <person name="Fischer W."/>
            <person name="Windhager L."/>
            <person name="Karnholz A."/>
            <person name="Zeiller M."/>
            <person name="Zimmer R."/>
            <person name="Haas R."/>
        </authorList>
    </citation>
    <scope>NUCLEOTIDE SEQUENCE [LARGE SCALE GENOMIC DNA]</scope>
    <source>
        <strain>P12</strain>
    </source>
</reference>
<name>GMHA_HELP2</name>
<accession>B6JM81</accession>
<protein>
    <recommendedName>
        <fullName evidence="1">Phosphoheptose isomerase</fullName>
        <ecNumber evidence="1">5.3.1.28</ecNumber>
    </recommendedName>
    <alternativeName>
        <fullName evidence="1">Sedoheptulose 7-phosphate isomerase</fullName>
    </alternativeName>
</protein>
<gene>
    <name evidence="1" type="primary">gmhA</name>
    <name type="ordered locus">HPP12_0857</name>
</gene>
<keyword id="KW-0119">Carbohydrate metabolism</keyword>
<keyword id="KW-0963">Cytoplasm</keyword>
<keyword id="KW-0413">Isomerase</keyword>
<keyword id="KW-0479">Metal-binding</keyword>
<keyword id="KW-0862">Zinc</keyword>
<evidence type="ECO:0000255" key="1">
    <source>
        <dbReference type="HAMAP-Rule" id="MF_00067"/>
    </source>
</evidence>
<comment type="function">
    <text evidence="1">Catalyzes the isomerization of sedoheptulose 7-phosphate in D-glycero-D-manno-heptose 7-phosphate.</text>
</comment>
<comment type="catalytic activity">
    <reaction evidence="1">
        <text>2 D-sedoheptulose 7-phosphate = D-glycero-alpha-D-manno-heptose 7-phosphate + D-glycero-beta-D-manno-heptose 7-phosphate</text>
        <dbReference type="Rhea" id="RHEA:27489"/>
        <dbReference type="ChEBI" id="CHEBI:57483"/>
        <dbReference type="ChEBI" id="CHEBI:60203"/>
        <dbReference type="ChEBI" id="CHEBI:60204"/>
        <dbReference type="EC" id="5.3.1.28"/>
    </reaction>
</comment>
<comment type="cofactor">
    <cofactor evidence="1">
        <name>Zn(2+)</name>
        <dbReference type="ChEBI" id="CHEBI:29105"/>
    </cofactor>
    <text evidence="1">Binds 1 zinc ion per subunit.</text>
</comment>
<comment type="pathway">
    <text evidence="1">Carbohydrate biosynthesis; D-glycero-D-manno-heptose 7-phosphate biosynthesis; D-glycero-alpha-D-manno-heptose 7-phosphate and D-glycero-beta-D-manno-heptose 7-phosphate from sedoheptulose 7-phosphate: step 1/1.</text>
</comment>
<comment type="subunit">
    <text evidence="1">Homotetramer.</text>
</comment>
<comment type="subcellular location">
    <subcellularLocation>
        <location evidence="1">Cytoplasm</location>
    </subcellularLocation>
</comment>
<comment type="miscellaneous">
    <text evidence="1">The reaction produces a racemic mixture of D-glycero-alpha-D-manno-heptose 7-phosphate and D-glycero-beta-D-manno-heptose 7-phosphate.</text>
</comment>
<comment type="similarity">
    <text evidence="1">Belongs to the SIS family. GmhA subfamily.</text>
</comment>
<organism>
    <name type="scientific">Helicobacter pylori (strain P12)</name>
    <dbReference type="NCBI Taxonomy" id="570508"/>
    <lineage>
        <taxon>Bacteria</taxon>
        <taxon>Pseudomonadati</taxon>
        <taxon>Campylobacterota</taxon>
        <taxon>Epsilonproteobacteria</taxon>
        <taxon>Campylobacterales</taxon>
        <taxon>Helicobacteraceae</taxon>
        <taxon>Helicobacter</taxon>
    </lineage>
</organism>
<dbReference type="EC" id="5.3.1.28" evidence="1"/>
<dbReference type="EMBL" id="CP001217">
    <property type="protein sequence ID" value="ACJ08009.1"/>
    <property type="molecule type" value="Genomic_DNA"/>
</dbReference>
<dbReference type="SMR" id="B6JM81"/>
<dbReference type="KEGG" id="hpp:HPP12_0857"/>
<dbReference type="HOGENOM" id="CLU_080999_4_0_7"/>
<dbReference type="UniPathway" id="UPA00041">
    <property type="reaction ID" value="UER00436"/>
</dbReference>
<dbReference type="Proteomes" id="UP000008198">
    <property type="component" value="Chromosome"/>
</dbReference>
<dbReference type="GO" id="GO:0005737">
    <property type="term" value="C:cytoplasm"/>
    <property type="evidence" value="ECO:0007669"/>
    <property type="project" value="UniProtKB-SubCell"/>
</dbReference>
<dbReference type="GO" id="GO:0097367">
    <property type="term" value="F:carbohydrate derivative binding"/>
    <property type="evidence" value="ECO:0007669"/>
    <property type="project" value="InterPro"/>
</dbReference>
<dbReference type="GO" id="GO:0008968">
    <property type="term" value="F:D-sedoheptulose 7-phosphate isomerase activity"/>
    <property type="evidence" value="ECO:0007669"/>
    <property type="project" value="UniProtKB-UniRule"/>
</dbReference>
<dbReference type="GO" id="GO:0008270">
    <property type="term" value="F:zinc ion binding"/>
    <property type="evidence" value="ECO:0007669"/>
    <property type="project" value="UniProtKB-UniRule"/>
</dbReference>
<dbReference type="GO" id="GO:0005975">
    <property type="term" value="P:carbohydrate metabolic process"/>
    <property type="evidence" value="ECO:0007669"/>
    <property type="project" value="UniProtKB-UniRule"/>
</dbReference>
<dbReference type="GO" id="GO:2001061">
    <property type="term" value="P:D-glycero-D-manno-heptose 7-phosphate biosynthetic process"/>
    <property type="evidence" value="ECO:0007669"/>
    <property type="project" value="UniProtKB-UniPathway"/>
</dbReference>
<dbReference type="CDD" id="cd05006">
    <property type="entry name" value="SIS_GmhA"/>
    <property type="match status" value="1"/>
</dbReference>
<dbReference type="Gene3D" id="3.40.50.10490">
    <property type="entry name" value="Glucose-6-phosphate isomerase like protein, domain 1"/>
    <property type="match status" value="1"/>
</dbReference>
<dbReference type="HAMAP" id="MF_00067">
    <property type="entry name" value="GmhA"/>
    <property type="match status" value="1"/>
</dbReference>
<dbReference type="InterPro" id="IPR035461">
    <property type="entry name" value="GmhA/DiaA"/>
</dbReference>
<dbReference type="InterPro" id="IPR004515">
    <property type="entry name" value="Phosphoheptose_Isoase"/>
</dbReference>
<dbReference type="InterPro" id="IPR001347">
    <property type="entry name" value="SIS_dom"/>
</dbReference>
<dbReference type="InterPro" id="IPR046348">
    <property type="entry name" value="SIS_dom_sf"/>
</dbReference>
<dbReference type="InterPro" id="IPR050099">
    <property type="entry name" value="SIS_GmhA/DiaA_subfam"/>
</dbReference>
<dbReference type="NCBIfam" id="TIGR00441">
    <property type="entry name" value="gmhA"/>
    <property type="match status" value="1"/>
</dbReference>
<dbReference type="PANTHER" id="PTHR30390:SF6">
    <property type="entry name" value="DNAA INITIATOR-ASSOCIATING PROTEIN DIAA"/>
    <property type="match status" value="1"/>
</dbReference>
<dbReference type="PANTHER" id="PTHR30390">
    <property type="entry name" value="SEDOHEPTULOSE 7-PHOSPHATE ISOMERASE / DNAA INITIATOR-ASSOCIATING FACTOR FOR REPLICATION INITIATION"/>
    <property type="match status" value="1"/>
</dbReference>
<dbReference type="Pfam" id="PF13580">
    <property type="entry name" value="SIS_2"/>
    <property type="match status" value="1"/>
</dbReference>
<dbReference type="SUPFAM" id="SSF53697">
    <property type="entry name" value="SIS domain"/>
    <property type="match status" value="1"/>
</dbReference>
<dbReference type="PROSITE" id="PS51464">
    <property type="entry name" value="SIS"/>
    <property type="match status" value="1"/>
</dbReference>